<reference key="1">
    <citation type="journal article" date="2002" name="Nature">
        <title>The genome sequence of Schizosaccharomyces pombe.</title>
        <authorList>
            <person name="Wood V."/>
            <person name="Gwilliam R."/>
            <person name="Rajandream M.A."/>
            <person name="Lyne M.H."/>
            <person name="Lyne R."/>
            <person name="Stewart A."/>
            <person name="Sgouros J.G."/>
            <person name="Peat N."/>
            <person name="Hayles J."/>
            <person name="Baker S.G."/>
            <person name="Basham D."/>
            <person name="Bowman S."/>
            <person name="Brooks K."/>
            <person name="Brown D."/>
            <person name="Brown S."/>
            <person name="Chillingworth T."/>
            <person name="Churcher C.M."/>
            <person name="Collins M."/>
            <person name="Connor R."/>
            <person name="Cronin A."/>
            <person name="Davis P."/>
            <person name="Feltwell T."/>
            <person name="Fraser A."/>
            <person name="Gentles S."/>
            <person name="Goble A."/>
            <person name="Hamlin N."/>
            <person name="Harris D.E."/>
            <person name="Hidalgo J."/>
            <person name="Hodgson G."/>
            <person name="Holroyd S."/>
            <person name="Hornsby T."/>
            <person name="Howarth S."/>
            <person name="Huckle E.J."/>
            <person name="Hunt S."/>
            <person name="Jagels K."/>
            <person name="James K.D."/>
            <person name="Jones L."/>
            <person name="Jones M."/>
            <person name="Leather S."/>
            <person name="McDonald S."/>
            <person name="McLean J."/>
            <person name="Mooney P."/>
            <person name="Moule S."/>
            <person name="Mungall K.L."/>
            <person name="Murphy L.D."/>
            <person name="Niblett D."/>
            <person name="Odell C."/>
            <person name="Oliver K."/>
            <person name="O'Neil S."/>
            <person name="Pearson D."/>
            <person name="Quail M.A."/>
            <person name="Rabbinowitsch E."/>
            <person name="Rutherford K.M."/>
            <person name="Rutter S."/>
            <person name="Saunders D."/>
            <person name="Seeger K."/>
            <person name="Sharp S."/>
            <person name="Skelton J."/>
            <person name="Simmonds M.N."/>
            <person name="Squares R."/>
            <person name="Squares S."/>
            <person name="Stevens K."/>
            <person name="Taylor K."/>
            <person name="Taylor R.G."/>
            <person name="Tivey A."/>
            <person name="Walsh S.V."/>
            <person name="Warren T."/>
            <person name="Whitehead S."/>
            <person name="Woodward J.R."/>
            <person name="Volckaert G."/>
            <person name="Aert R."/>
            <person name="Robben J."/>
            <person name="Grymonprez B."/>
            <person name="Weltjens I."/>
            <person name="Vanstreels E."/>
            <person name="Rieger M."/>
            <person name="Schaefer M."/>
            <person name="Mueller-Auer S."/>
            <person name="Gabel C."/>
            <person name="Fuchs M."/>
            <person name="Duesterhoeft A."/>
            <person name="Fritzc C."/>
            <person name="Holzer E."/>
            <person name="Moestl D."/>
            <person name="Hilbert H."/>
            <person name="Borzym K."/>
            <person name="Langer I."/>
            <person name="Beck A."/>
            <person name="Lehrach H."/>
            <person name="Reinhardt R."/>
            <person name="Pohl T.M."/>
            <person name="Eger P."/>
            <person name="Zimmermann W."/>
            <person name="Wedler H."/>
            <person name="Wambutt R."/>
            <person name="Purnelle B."/>
            <person name="Goffeau A."/>
            <person name="Cadieu E."/>
            <person name="Dreano S."/>
            <person name="Gloux S."/>
            <person name="Lelaure V."/>
            <person name="Mottier S."/>
            <person name="Galibert F."/>
            <person name="Aves S.J."/>
            <person name="Xiang Z."/>
            <person name="Hunt C."/>
            <person name="Moore K."/>
            <person name="Hurst S.M."/>
            <person name="Lucas M."/>
            <person name="Rochet M."/>
            <person name="Gaillardin C."/>
            <person name="Tallada V.A."/>
            <person name="Garzon A."/>
            <person name="Thode G."/>
            <person name="Daga R.R."/>
            <person name="Cruzado L."/>
            <person name="Jimenez J."/>
            <person name="Sanchez M."/>
            <person name="del Rey F."/>
            <person name="Benito J."/>
            <person name="Dominguez A."/>
            <person name="Revuelta J.L."/>
            <person name="Moreno S."/>
            <person name="Armstrong J."/>
            <person name="Forsburg S.L."/>
            <person name="Cerutti L."/>
            <person name="Lowe T."/>
            <person name="McCombie W.R."/>
            <person name="Paulsen I."/>
            <person name="Potashkin J."/>
            <person name="Shpakovski G.V."/>
            <person name="Ussery D."/>
            <person name="Barrell B.G."/>
            <person name="Nurse P."/>
        </authorList>
    </citation>
    <scope>NUCLEOTIDE SEQUENCE [LARGE SCALE GENOMIC DNA]</scope>
    <source>
        <strain>972 / ATCC 24843</strain>
    </source>
</reference>
<reference key="2">
    <citation type="journal article" date="2006" name="Nat. Biotechnol.">
        <title>ORFeome cloning and global analysis of protein localization in the fission yeast Schizosaccharomyces pombe.</title>
        <authorList>
            <person name="Matsuyama A."/>
            <person name="Arai R."/>
            <person name="Yashiroda Y."/>
            <person name="Shirai A."/>
            <person name="Kamata A."/>
            <person name="Sekido S."/>
            <person name="Kobayashi Y."/>
            <person name="Hashimoto A."/>
            <person name="Hamamoto M."/>
            <person name="Hiraoka Y."/>
            <person name="Horinouchi S."/>
            <person name="Yoshida M."/>
        </authorList>
    </citation>
    <scope>SUBCELLULAR LOCATION [LARGE SCALE ANALYSIS]</scope>
</reference>
<keyword id="KW-0963">Cytoplasm</keyword>
<keyword id="KW-0539">Nucleus</keyword>
<keyword id="KW-0653">Protein transport</keyword>
<keyword id="KW-1185">Reference proteome</keyword>
<keyword id="KW-0813">Transport</keyword>
<organism>
    <name type="scientific">Schizosaccharomyces pombe (strain 972 / ATCC 24843)</name>
    <name type="common">Fission yeast</name>
    <dbReference type="NCBI Taxonomy" id="284812"/>
    <lineage>
        <taxon>Eukaryota</taxon>
        <taxon>Fungi</taxon>
        <taxon>Dikarya</taxon>
        <taxon>Ascomycota</taxon>
        <taxon>Taphrinomycotina</taxon>
        <taxon>Schizosaccharomycetes</taxon>
        <taxon>Schizosaccharomycetales</taxon>
        <taxon>Schizosaccharomycetaceae</taxon>
        <taxon>Schizosaccharomyces</taxon>
    </lineage>
</organism>
<comment type="function">
    <text evidence="1">Acts as a non-essential component of the Sec62/63 complex which is involved in SRP-independent post-translational translocation across the endoplasmic reticulum (ER) and functions together with the Sec61 complex and bip1 in a channel-forming translocon complex. A cycle of assembly and disassembly of Sec62/63 complex from sec61 may govern the activity of the translocon. sec72 may be involved in signal peptide recognition for a defined subset of leader peptides, or may increase the efficiency of unusual or 'difficult' secretory precursors to the translocation pore, it may be that this protein binds charged leader peptides to the membrane until they engage the translocation apparatus.</text>
</comment>
<comment type="subunit">
    <text evidence="1">Component of the heterotetrameric Sec62/63complex composed of sec62, sec63, sec66 and sec72. The Sec62/63 complex associates with the Sec61 complex to form the Sec complex.</text>
</comment>
<comment type="subcellular location">
    <subcellularLocation>
        <location evidence="2">Cytoplasm</location>
    </subcellularLocation>
    <subcellularLocation>
        <location evidence="2">Nucleus</location>
    </subcellularLocation>
</comment>
<evidence type="ECO:0000250" key="1">
    <source>
        <dbReference type="UniProtKB" id="P39742"/>
    </source>
</evidence>
<evidence type="ECO:0000269" key="2">
    <source>
    </source>
</evidence>
<proteinExistence type="inferred from homology"/>
<sequence length="192" mass="21657">MVAKQESVVAPQVDVSKWSGKELELGKKVNEYAKSLATFKYPFFIPPPYPPAKPNMALSTQVNKMKQTANEAFKRKKYEEAKKLYGLALQLALNRCTWEPSILTREEASVMLCNRAAAEIALSQFPEALADANAALKIRNNYGKCYYRKAKALEAMHRIEEAKQVVRDGLILAEPVTRNELVALWASYTEKD</sequence>
<protein>
    <recommendedName>
        <fullName>ER protein translocation subcomplex subunit sec67</fullName>
    </recommendedName>
</protein>
<accession>O14085</accession>
<name>SEC67_SCHPO</name>
<dbReference type="EMBL" id="CU329670">
    <property type="protein sequence ID" value="CAB16260.1"/>
    <property type="molecule type" value="Genomic_DNA"/>
</dbReference>
<dbReference type="PIR" id="T38535">
    <property type="entry name" value="T38535"/>
</dbReference>
<dbReference type="RefSeq" id="NP_594381.1">
    <property type="nucleotide sequence ID" value="NM_001019802.2"/>
</dbReference>
<dbReference type="SMR" id="O14085"/>
<dbReference type="BioGRID" id="277965">
    <property type="interactions" value="7"/>
</dbReference>
<dbReference type="FunCoup" id="O14085">
    <property type="interactions" value="272"/>
</dbReference>
<dbReference type="STRING" id="284812.O14085"/>
<dbReference type="iPTMnet" id="O14085"/>
<dbReference type="PaxDb" id="4896-SPAC2F3.02.1"/>
<dbReference type="EnsemblFungi" id="SPAC2F3.02.1">
    <property type="protein sequence ID" value="SPAC2F3.02.1:pep"/>
    <property type="gene ID" value="SPAC2F3.02"/>
</dbReference>
<dbReference type="GeneID" id="2541463"/>
<dbReference type="KEGG" id="spo:2541463"/>
<dbReference type="PomBase" id="SPAC2F3.02">
    <property type="gene designation" value="sec67"/>
</dbReference>
<dbReference type="VEuPathDB" id="FungiDB:SPAC2F3.02"/>
<dbReference type="eggNOG" id="ENOG502S1IJ">
    <property type="taxonomic scope" value="Eukaryota"/>
</dbReference>
<dbReference type="HOGENOM" id="CLU_090376_2_0_1"/>
<dbReference type="InParanoid" id="O14085"/>
<dbReference type="OMA" id="HRMDEAK"/>
<dbReference type="PhylomeDB" id="O14085"/>
<dbReference type="PRO" id="PR:O14085"/>
<dbReference type="Proteomes" id="UP000002485">
    <property type="component" value="Chromosome I"/>
</dbReference>
<dbReference type="GO" id="GO:0005829">
    <property type="term" value="C:cytosol"/>
    <property type="evidence" value="ECO:0007005"/>
    <property type="project" value="PomBase"/>
</dbReference>
<dbReference type="GO" id="GO:0005634">
    <property type="term" value="C:nucleus"/>
    <property type="evidence" value="ECO:0007005"/>
    <property type="project" value="PomBase"/>
</dbReference>
<dbReference type="GO" id="GO:0031207">
    <property type="term" value="C:Sec62/Sec63 complex"/>
    <property type="evidence" value="ECO:0000266"/>
    <property type="project" value="PomBase"/>
</dbReference>
<dbReference type="GO" id="GO:0030544">
    <property type="term" value="F:Hsp70 protein binding"/>
    <property type="evidence" value="ECO:0000318"/>
    <property type="project" value="GO_Central"/>
</dbReference>
<dbReference type="GO" id="GO:0051879">
    <property type="term" value="F:Hsp90 protein binding"/>
    <property type="evidence" value="ECO:0000318"/>
    <property type="project" value="GO_Central"/>
</dbReference>
<dbReference type="GO" id="GO:0006620">
    <property type="term" value="P:post-translational protein targeting to endoplasmic reticulum membrane"/>
    <property type="evidence" value="ECO:0000266"/>
    <property type="project" value="PomBase"/>
</dbReference>
<dbReference type="GO" id="GO:0006457">
    <property type="term" value="P:protein folding"/>
    <property type="evidence" value="ECO:0000318"/>
    <property type="project" value="GO_Central"/>
</dbReference>
<dbReference type="GO" id="GO:0015031">
    <property type="term" value="P:protein transport"/>
    <property type="evidence" value="ECO:0007669"/>
    <property type="project" value="UniProtKB-KW"/>
</dbReference>
<dbReference type="Gene3D" id="1.25.40.10">
    <property type="entry name" value="Tetratricopeptide repeat domain"/>
    <property type="match status" value="1"/>
</dbReference>
<dbReference type="InterPro" id="IPR011990">
    <property type="entry name" value="TPR-like_helical_dom_sf"/>
</dbReference>
<dbReference type="InterPro" id="IPR019734">
    <property type="entry name" value="TPR_rpt"/>
</dbReference>
<dbReference type="PANTHER" id="PTHR46035">
    <property type="entry name" value="TETRATRICOPEPTIDE REPEAT PROTEIN 4"/>
    <property type="match status" value="1"/>
</dbReference>
<dbReference type="PANTHER" id="PTHR46035:SF3">
    <property type="entry name" value="TRANSLOCATION PROTEIN SEC72"/>
    <property type="match status" value="1"/>
</dbReference>
<dbReference type="SMART" id="SM00028">
    <property type="entry name" value="TPR"/>
    <property type="match status" value="3"/>
</dbReference>
<dbReference type="SUPFAM" id="SSF48452">
    <property type="entry name" value="TPR-like"/>
    <property type="match status" value="1"/>
</dbReference>
<gene>
    <name type="primary">sec67</name>
    <name type="ORF">SPAC2F3.02</name>
</gene>
<feature type="chain" id="PRO_0000311764" description="ER protein translocation subcomplex subunit sec67">
    <location>
        <begin position="1"/>
        <end position="192"/>
    </location>
</feature>